<name>GCS2_BURCH</name>
<accession>A0K2U6</accession>
<evidence type="ECO:0000255" key="1">
    <source>
        <dbReference type="HAMAP-Rule" id="MF_01609"/>
    </source>
</evidence>
<comment type="function">
    <text evidence="1">ATP-dependent carboxylate-amine ligase which exhibits weak glutamate--cysteine ligase activity.</text>
</comment>
<comment type="catalytic activity">
    <reaction evidence="1">
        <text>L-cysteine + L-glutamate + ATP = gamma-L-glutamyl-L-cysteine + ADP + phosphate + H(+)</text>
        <dbReference type="Rhea" id="RHEA:13285"/>
        <dbReference type="ChEBI" id="CHEBI:15378"/>
        <dbReference type="ChEBI" id="CHEBI:29985"/>
        <dbReference type="ChEBI" id="CHEBI:30616"/>
        <dbReference type="ChEBI" id="CHEBI:35235"/>
        <dbReference type="ChEBI" id="CHEBI:43474"/>
        <dbReference type="ChEBI" id="CHEBI:58173"/>
        <dbReference type="ChEBI" id="CHEBI:456216"/>
        <dbReference type="EC" id="6.3.2.2"/>
    </reaction>
</comment>
<comment type="similarity">
    <text evidence="1">Belongs to the glutamate--cysteine ligase type 2 family. YbdK subfamily.</text>
</comment>
<proteinExistence type="inferred from homology"/>
<sequence>MALETFVNSEPFTFGVELEIQVVNTHNYDLTKAASDLMRLIQGETFPGNITPEITESMIELSTGICHSHEQAVSELHAIRDVLVKAADQLNVGLAGGGTHAFQQWSDRQIYDAPRFQYISELYGYLAKQFTVFGQHVHIGCPDPDSALFLLHSMSRFIPHFIALSASSPFVQNVDTGFHSARLNSVFAFPLSGRAPFVLTWDSFEEYFTKMVNTGVVNSMKDFYWDIRPKPGYGTIEVRVMDTPLSVDRAAAIACYIQTLARYLLTDRPLKLSEDDYLVYTFNRFEACRFGLEGTCVNPQTGERRTIAEDILDTLDRIAPHAAALGSRAALDEIGALAKARVNDASWLRTVFKQEKSLNETVRQQCLRWRE</sequence>
<feature type="chain" id="PRO_0000291487" description="Putative glutamate--cysteine ligase 2">
    <location>
        <begin position="1"/>
        <end position="371"/>
    </location>
</feature>
<dbReference type="EC" id="6.3.2.2" evidence="1"/>
<dbReference type="EMBL" id="CP000458">
    <property type="protein sequence ID" value="ABK06823.1"/>
    <property type="molecule type" value="Genomic_DNA"/>
</dbReference>
<dbReference type="RefSeq" id="WP_006490006.1">
    <property type="nucleotide sequence ID" value="NC_008542.1"/>
</dbReference>
<dbReference type="SMR" id="A0K2U6"/>
<dbReference type="KEGG" id="bch:Bcen2424_0069"/>
<dbReference type="HOGENOM" id="CLU_044848_1_1_4"/>
<dbReference type="GO" id="GO:0005524">
    <property type="term" value="F:ATP binding"/>
    <property type="evidence" value="ECO:0007669"/>
    <property type="project" value="UniProtKB-KW"/>
</dbReference>
<dbReference type="GO" id="GO:0004357">
    <property type="term" value="F:glutamate-cysteine ligase activity"/>
    <property type="evidence" value="ECO:0007669"/>
    <property type="project" value="UniProtKB-EC"/>
</dbReference>
<dbReference type="GO" id="GO:0042398">
    <property type="term" value="P:modified amino acid biosynthetic process"/>
    <property type="evidence" value="ECO:0007669"/>
    <property type="project" value="InterPro"/>
</dbReference>
<dbReference type="Gene3D" id="3.30.590.20">
    <property type="match status" value="1"/>
</dbReference>
<dbReference type="HAMAP" id="MF_01609">
    <property type="entry name" value="Glu_cys_ligase_2"/>
    <property type="match status" value="1"/>
</dbReference>
<dbReference type="InterPro" id="IPR050141">
    <property type="entry name" value="GCL_type2/YbdK_subfam"/>
</dbReference>
<dbReference type="InterPro" id="IPR006336">
    <property type="entry name" value="GCS2"/>
</dbReference>
<dbReference type="InterPro" id="IPR014746">
    <property type="entry name" value="Gln_synth/guanido_kin_cat_dom"/>
</dbReference>
<dbReference type="InterPro" id="IPR011793">
    <property type="entry name" value="YbdK"/>
</dbReference>
<dbReference type="NCBIfam" id="TIGR02050">
    <property type="entry name" value="gshA_cyan_rel"/>
    <property type="match status" value="1"/>
</dbReference>
<dbReference type="NCBIfam" id="NF010040">
    <property type="entry name" value="PRK13516.1"/>
    <property type="match status" value="1"/>
</dbReference>
<dbReference type="PANTHER" id="PTHR36510">
    <property type="entry name" value="GLUTAMATE--CYSTEINE LIGASE 2-RELATED"/>
    <property type="match status" value="1"/>
</dbReference>
<dbReference type="PANTHER" id="PTHR36510:SF1">
    <property type="entry name" value="GLUTAMATE--CYSTEINE LIGASE 2-RELATED"/>
    <property type="match status" value="1"/>
</dbReference>
<dbReference type="Pfam" id="PF04107">
    <property type="entry name" value="GCS2"/>
    <property type="match status" value="1"/>
</dbReference>
<dbReference type="SUPFAM" id="SSF55931">
    <property type="entry name" value="Glutamine synthetase/guanido kinase"/>
    <property type="match status" value="1"/>
</dbReference>
<organism>
    <name type="scientific">Burkholderia cenocepacia (strain HI2424)</name>
    <dbReference type="NCBI Taxonomy" id="331272"/>
    <lineage>
        <taxon>Bacteria</taxon>
        <taxon>Pseudomonadati</taxon>
        <taxon>Pseudomonadota</taxon>
        <taxon>Betaproteobacteria</taxon>
        <taxon>Burkholderiales</taxon>
        <taxon>Burkholderiaceae</taxon>
        <taxon>Burkholderia</taxon>
        <taxon>Burkholderia cepacia complex</taxon>
    </lineage>
</organism>
<gene>
    <name type="ordered locus">Bcen2424_0069</name>
</gene>
<keyword id="KW-0067">ATP-binding</keyword>
<keyword id="KW-0436">Ligase</keyword>
<keyword id="KW-0547">Nucleotide-binding</keyword>
<protein>
    <recommendedName>
        <fullName evidence="1">Putative glutamate--cysteine ligase 2</fullName>
        <ecNumber evidence="1">6.3.2.2</ecNumber>
    </recommendedName>
    <alternativeName>
        <fullName evidence="1">Gamma-glutamylcysteine synthetase 2</fullName>
        <shortName evidence="1">GCS 2</shortName>
        <shortName evidence="1">Gamma-GCS 2</shortName>
    </alternativeName>
</protein>
<reference key="1">
    <citation type="submission" date="2006-08" db="EMBL/GenBank/DDBJ databases">
        <title>Complete sequence of chromosome 1 of Burkholderia cenocepacia HI2424.</title>
        <authorList>
            <person name="Copeland A."/>
            <person name="Lucas S."/>
            <person name="Lapidus A."/>
            <person name="Barry K."/>
            <person name="Detter J.C."/>
            <person name="Glavina del Rio T."/>
            <person name="Hammon N."/>
            <person name="Israni S."/>
            <person name="Pitluck S."/>
            <person name="Chain P."/>
            <person name="Malfatti S."/>
            <person name="Shin M."/>
            <person name="Vergez L."/>
            <person name="Schmutz J."/>
            <person name="Larimer F."/>
            <person name="Land M."/>
            <person name="Hauser L."/>
            <person name="Kyrpides N."/>
            <person name="Kim E."/>
            <person name="LiPuma J.J."/>
            <person name="Gonzalez C.F."/>
            <person name="Konstantinidis K."/>
            <person name="Tiedje J.M."/>
            <person name="Richardson P."/>
        </authorList>
    </citation>
    <scope>NUCLEOTIDE SEQUENCE [LARGE SCALE GENOMIC DNA]</scope>
    <source>
        <strain>HI2424</strain>
    </source>
</reference>